<sequence>MGGCTVKPQLLLLALVLHPWNPCLGADSEKPSSIPTDKLLVITVATKESDGFHRFMQSAKYFNYTVKVLGQGEEWRGGDGINSIGGGQKVRLMKEVMEHYADQDDLVVMFTECFDVIFAGGPEEVLKKFQKANHKVVFAADGILWPDKRLADKYPVVHIGKRYLNSGGFIGYAPYVNRIVQQWNLQDNDDDQLFYTKVYIDPLKREAINITLDHKCKIFQTLNGAVDEVVLKFENGKARAKNTFYETLPVAINGNGPTKILLNYFGNYVPNSWTQDNGCTLCEFDTVDLSAVDVHPNVSIGVFIEQPTPFLPRFLDILLTLDYPKEALKLFIHNKEVYHEKDIKVFFDKAKHEIKTIKIVGPEENLSQAEARNMGMDFCRQDEKCDYYFSVDADVVLTNPRTLKILIEQNRKIIAPLVTRHGKLWSNFWGALSPDGYYARSEDYVDIVQGNRVGVWNVPYMANVYLIKGKTLRSEMNERNYFVRDKLDPDMALCRNAREMGVFMYISNRHEFGRLLSTANYNTSHYNNDLWQIFENPVDWKEKYINRDYSKIFTENIVEQPCPDVFWFPIFSEKACDELVEEMEHYGKWSGGKHHDSRISGGYENVPTDDIHMKQVDLENVWLHFIREFIAPVTLKVFAGYYTKGFALLNFVVKYSPERQRSLRPHHDASTFTINIALNNVGEDFQGGGCKFLRYNCSIESPRKGWSFMHPGRLTHLHEGLPVKNGTRYIAVSFIDP</sequence>
<dbReference type="EC" id="1.14.11.4" evidence="1"/>
<dbReference type="EMBL" id="U84573">
    <property type="protein sequence ID" value="AAB58363.1"/>
    <property type="molecule type" value="mRNA"/>
</dbReference>
<dbReference type="EMBL" id="AK125700">
    <property type="protein sequence ID" value="BAG54235.1"/>
    <property type="molecule type" value="mRNA"/>
</dbReference>
<dbReference type="EMBL" id="AB209879">
    <property type="protein sequence ID" value="BAD93116.1"/>
    <property type="status" value="ALT_INIT"/>
    <property type="molecule type" value="mRNA"/>
</dbReference>
<dbReference type="EMBL" id="AC092982">
    <property type="status" value="NOT_ANNOTATED_CDS"/>
    <property type="molecule type" value="Genomic_DNA"/>
</dbReference>
<dbReference type="EMBL" id="AC107021">
    <property type="status" value="NOT_ANNOTATED_CDS"/>
    <property type="molecule type" value="Genomic_DNA"/>
</dbReference>
<dbReference type="EMBL" id="BC037169">
    <property type="protein sequence ID" value="AAH37169.1"/>
    <property type="molecule type" value="mRNA"/>
</dbReference>
<dbReference type="CCDS" id="CCDS3131.1">
    <molecule id="O00469-1"/>
</dbReference>
<dbReference type="CCDS" id="CCDS3132.1">
    <molecule id="O00469-2"/>
</dbReference>
<dbReference type="PIR" id="A59144">
    <property type="entry name" value="A59144"/>
</dbReference>
<dbReference type="RefSeq" id="NP_000926.2">
    <molecule id="O00469-1"/>
    <property type="nucleotide sequence ID" value="NM_000935.3"/>
</dbReference>
<dbReference type="RefSeq" id="NP_891988.1">
    <molecule id="O00469-2"/>
    <property type="nucleotide sequence ID" value="NM_182943.3"/>
</dbReference>
<dbReference type="SMR" id="O00469"/>
<dbReference type="BioGRID" id="111367">
    <property type="interactions" value="191"/>
</dbReference>
<dbReference type="CORUM" id="O00469"/>
<dbReference type="FunCoup" id="O00469">
    <property type="interactions" value="1022"/>
</dbReference>
<dbReference type="IntAct" id="O00469">
    <property type="interactions" value="55"/>
</dbReference>
<dbReference type="MINT" id="O00469"/>
<dbReference type="STRING" id="9606.ENSP00000282903"/>
<dbReference type="BindingDB" id="O00469"/>
<dbReference type="ChEMBL" id="CHEMBL5465273"/>
<dbReference type="DrugBank" id="DB00126">
    <property type="generic name" value="Ascorbic acid"/>
</dbReference>
<dbReference type="GlyConnect" id="746">
    <property type="glycosylation" value="8 N-Linked glycans (3 sites)"/>
</dbReference>
<dbReference type="GlyCosmos" id="O00469">
    <property type="glycosylation" value="7 sites, 9 glycans"/>
</dbReference>
<dbReference type="GlyGen" id="O00469">
    <property type="glycosylation" value="9 sites, 43 N-linked glycans (6 sites), 1 O-linked glycan (2 sites)"/>
</dbReference>
<dbReference type="iPTMnet" id="O00469"/>
<dbReference type="PhosphoSitePlus" id="O00469"/>
<dbReference type="SwissPalm" id="O00469"/>
<dbReference type="BioMuta" id="PLOD2"/>
<dbReference type="CPTAC" id="CPTAC-568"/>
<dbReference type="CPTAC" id="CPTAC-569"/>
<dbReference type="jPOST" id="O00469"/>
<dbReference type="MassIVE" id="O00469"/>
<dbReference type="PaxDb" id="9606-ENSP00000282903"/>
<dbReference type="PeptideAtlas" id="O00469"/>
<dbReference type="ProteomicsDB" id="3798"/>
<dbReference type="ProteomicsDB" id="47915">
    <molecule id="O00469-1"/>
</dbReference>
<dbReference type="ProteomicsDB" id="47916">
    <molecule id="O00469-2"/>
</dbReference>
<dbReference type="Pumba" id="O00469"/>
<dbReference type="Antibodypedia" id="33520">
    <property type="antibodies" value="248 antibodies from 28 providers"/>
</dbReference>
<dbReference type="DNASU" id="5352"/>
<dbReference type="Ensembl" id="ENST00000282903.10">
    <molecule id="O00469-2"/>
    <property type="protein sequence ID" value="ENSP00000282903.5"/>
    <property type="gene ID" value="ENSG00000152952.14"/>
</dbReference>
<dbReference type="Ensembl" id="ENST00000360060.7">
    <molecule id="O00469-1"/>
    <property type="protein sequence ID" value="ENSP00000353170.3"/>
    <property type="gene ID" value="ENSG00000152952.14"/>
</dbReference>
<dbReference type="Ensembl" id="ENST00000461497.5">
    <molecule id="O00469-3"/>
    <property type="protein sequence ID" value="ENSP00000419354.1"/>
    <property type="gene ID" value="ENSG00000152952.14"/>
</dbReference>
<dbReference type="Ensembl" id="ENST00000703518.1">
    <molecule id="O00469-2"/>
    <property type="protein sequence ID" value="ENSP00000515350.1"/>
    <property type="gene ID" value="ENSG00000152952.14"/>
</dbReference>
<dbReference type="Ensembl" id="ENST00000703522.1">
    <molecule id="O00469-2"/>
    <property type="protein sequence ID" value="ENSP00000515353.1"/>
    <property type="gene ID" value="ENSG00000152952.14"/>
</dbReference>
<dbReference type="Ensembl" id="ENST00000703523.1">
    <molecule id="O00469-1"/>
    <property type="protein sequence ID" value="ENSP00000515354.1"/>
    <property type="gene ID" value="ENSG00000152952.14"/>
</dbReference>
<dbReference type="Ensembl" id="ENST00000703527.1">
    <molecule id="O00469-2"/>
    <property type="protein sequence ID" value="ENSP00000515355.1"/>
    <property type="gene ID" value="ENSG00000152952.14"/>
</dbReference>
<dbReference type="GeneID" id="5352"/>
<dbReference type="KEGG" id="hsa:5352"/>
<dbReference type="MANE-Select" id="ENST00000282903.10">
    <molecule id="O00469-2"/>
    <property type="protein sequence ID" value="ENSP00000282903.5"/>
    <property type="RefSeq nucleotide sequence ID" value="NM_182943.3"/>
    <property type="RefSeq protein sequence ID" value="NP_891988.1"/>
</dbReference>
<dbReference type="UCSC" id="uc003evq.2">
    <molecule id="O00469-1"/>
    <property type="organism name" value="human"/>
</dbReference>
<dbReference type="AGR" id="HGNC:9082"/>
<dbReference type="CTD" id="5352"/>
<dbReference type="DisGeNET" id="5352"/>
<dbReference type="GeneCards" id="PLOD2"/>
<dbReference type="HGNC" id="HGNC:9082">
    <property type="gene designation" value="PLOD2"/>
</dbReference>
<dbReference type="HPA" id="ENSG00000152952">
    <property type="expression patterns" value="Low tissue specificity"/>
</dbReference>
<dbReference type="MalaCards" id="PLOD2"/>
<dbReference type="MIM" id="601865">
    <property type="type" value="gene"/>
</dbReference>
<dbReference type="MIM" id="609220">
    <property type="type" value="phenotype"/>
</dbReference>
<dbReference type="neXtProt" id="NX_O00469"/>
<dbReference type="OpenTargets" id="ENSG00000152952"/>
<dbReference type="Orphanet" id="2771">
    <property type="disease" value="Bruck syndrome"/>
</dbReference>
<dbReference type="PharmGKB" id="PA33412"/>
<dbReference type="VEuPathDB" id="HostDB:ENSG00000152952"/>
<dbReference type="eggNOG" id="KOG1971">
    <property type="taxonomic scope" value="Eukaryota"/>
</dbReference>
<dbReference type="GeneTree" id="ENSGT01030000234558"/>
<dbReference type="HOGENOM" id="CLU_022320_1_1_1"/>
<dbReference type="InParanoid" id="O00469"/>
<dbReference type="OMA" id="RNAREMN"/>
<dbReference type="OrthoDB" id="69177at2759"/>
<dbReference type="PAN-GO" id="O00469">
    <property type="GO annotations" value="3 GO annotations based on evolutionary models"/>
</dbReference>
<dbReference type="PhylomeDB" id="O00469"/>
<dbReference type="TreeFam" id="TF313826"/>
<dbReference type="BRENDA" id="1.14.11.4">
    <property type="organism ID" value="2681"/>
</dbReference>
<dbReference type="BRENDA" id="2.4.1.50">
    <property type="organism ID" value="2681"/>
</dbReference>
<dbReference type="PathwayCommons" id="O00469"/>
<dbReference type="Reactome" id="R-HSA-1650814">
    <property type="pathway name" value="Collagen biosynthesis and modifying enzymes"/>
</dbReference>
<dbReference type="SignaLink" id="O00469"/>
<dbReference type="BioGRID-ORCS" id="5352">
    <property type="hits" value="7 hits in 1164 CRISPR screens"/>
</dbReference>
<dbReference type="ChiTaRS" id="PLOD2">
    <property type="organism name" value="human"/>
</dbReference>
<dbReference type="GenomeRNAi" id="5352"/>
<dbReference type="Pharos" id="O00469">
    <property type="development level" value="Tbio"/>
</dbReference>
<dbReference type="PRO" id="PR:O00469"/>
<dbReference type="Proteomes" id="UP000005640">
    <property type="component" value="Chromosome 3"/>
</dbReference>
<dbReference type="RNAct" id="O00469">
    <property type="molecule type" value="protein"/>
</dbReference>
<dbReference type="Bgee" id="ENSG00000152952">
    <property type="expression patterns" value="Expressed in tibia and 201 other cell types or tissues"/>
</dbReference>
<dbReference type="ExpressionAtlas" id="O00469">
    <property type="expression patterns" value="baseline and differential"/>
</dbReference>
<dbReference type="GO" id="GO:0062023">
    <property type="term" value="C:collagen-containing extracellular matrix"/>
    <property type="evidence" value="ECO:0000318"/>
    <property type="project" value="GO_Central"/>
</dbReference>
<dbReference type="GO" id="GO:0005783">
    <property type="term" value="C:endoplasmic reticulum"/>
    <property type="evidence" value="ECO:0000318"/>
    <property type="project" value="GO_Central"/>
</dbReference>
<dbReference type="GO" id="GO:0005789">
    <property type="term" value="C:endoplasmic reticulum membrane"/>
    <property type="evidence" value="ECO:0000304"/>
    <property type="project" value="Reactome"/>
</dbReference>
<dbReference type="GO" id="GO:0070062">
    <property type="term" value="C:extracellular exosome"/>
    <property type="evidence" value="ECO:0007005"/>
    <property type="project" value="UniProtKB"/>
</dbReference>
<dbReference type="GO" id="GO:0005615">
    <property type="term" value="C:extracellular space"/>
    <property type="evidence" value="ECO:0000318"/>
    <property type="project" value="GO_Central"/>
</dbReference>
<dbReference type="GO" id="GO:0005794">
    <property type="term" value="C:Golgi apparatus"/>
    <property type="evidence" value="ECO:0000318"/>
    <property type="project" value="GO_Central"/>
</dbReference>
<dbReference type="GO" id="GO:0030867">
    <property type="term" value="C:rough endoplasmic reticulum membrane"/>
    <property type="evidence" value="ECO:0007669"/>
    <property type="project" value="UniProtKB-SubCell"/>
</dbReference>
<dbReference type="GO" id="GO:0005506">
    <property type="term" value="F:iron ion binding"/>
    <property type="evidence" value="ECO:0007669"/>
    <property type="project" value="InterPro"/>
</dbReference>
<dbReference type="GO" id="GO:0031418">
    <property type="term" value="F:L-ascorbic acid binding"/>
    <property type="evidence" value="ECO:0007669"/>
    <property type="project" value="UniProtKB-KW"/>
</dbReference>
<dbReference type="GO" id="GO:0008475">
    <property type="term" value="F:procollagen-lysine 5-dioxygenase activity"/>
    <property type="evidence" value="ECO:0000314"/>
    <property type="project" value="CAFA"/>
</dbReference>
<dbReference type="GO" id="GO:0030199">
    <property type="term" value="P:collagen fibril organization"/>
    <property type="evidence" value="ECO:0000318"/>
    <property type="project" value="GO_Central"/>
</dbReference>
<dbReference type="GO" id="GO:0046947">
    <property type="term" value="P:hydroxylysine biosynthetic process"/>
    <property type="evidence" value="ECO:0000314"/>
    <property type="project" value="CAFA"/>
</dbReference>
<dbReference type="GO" id="GO:0017185">
    <property type="term" value="P:peptidyl-lysine hydroxylation"/>
    <property type="evidence" value="ECO:0000314"/>
    <property type="project" value="CAFA"/>
</dbReference>
<dbReference type="GO" id="GO:0036211">
    <property type="term" value="P:protein modification process"/>
    <property type="evidence" value="ECO:0000304"/>
    <property type="project" value="ProtInc"/>
</dbReference>
<dbReference type="GO" id="GO:0001666">
    <property type="term" value="P:response to hypoxia"/>
    <property type="evidence" value="ECO:0000270"/>
    <property type="project" value="UniProtKB"/>
</dbReference>
<dbReference type="CDD" id="cd23003">
    <property type="entry name" value="GT_LH2"/>
    <property type="match status" value="1"/>
</dbReference>
<dbReference type="FunFam" id="2.60.120.620:FF:000004">
    <property type="entry name" value="Procollagen-lysine,2-oxoglutarate 5-dioxygenase 2"/>
    <property type="match status" value="1"/>
</dbReference>
<dbReference type="FunFam" id="3.90.550.10:FF:000140">
    <property type="entry name" value="Procollagen-lysine,2-oxoglutarate 5-dioxygenase 2"/>
    <property type="match status" value="1"/>
</dbReference>
<dbReference type="Gene3D" id="2.60.120.620">
    <property type="entry name" value="q2cbj1_9rhob like domain"/>
    <property type="match status" value="1"/>
</dbReference>
<dbReference type="Gene3D" id="3.90.550.10">
    <property type="entry name" value="Spore Coat Polysaccharide Biosynthesis Protein SpsA, Chain A"/>
    <property type="match status" value="1"/>
</dbReference>
<dbReference type="InterPro" id="IPR050757">
    <property type="entry name" value="Collagen_mod_GT25"/>
</dbReference>
<dbReference type="InterPro" id="IPR044861">
    <property type="entry name" value="IPNS-like_FE2OG_OXY"/>
</dbReference>
<dbReference type="InterPro" id="IPR029044">
    <property type="entry name" value="Nucleotide-diphossugar_trans"/>
</dbReference>
<dbReference type="InterPro" id="IPR005123">
    <property type="entry name" value="Oxoglu/Fe-dep_dioxygenase_dom"/>
</dbReference>
<dbReference type="InterPro" id="IPR006620">
    <property type="entry name" value="Pro_4_hyd_alph"/>
</dbReference>
<dbReference type="InterPro" id="IPR001006">
    <property type="entry name" value="Procol_lys_dOase"/>
</dbReference>
<dbReference type="PANTHER" id="PTHR10730:SF6">
    <property type="entry name" value="PROCOLLAGEN-LYSINE,2-OXOGLUTARATE 5-DIOXYGENASE 2"/>
    <property type="match status" value="1"/>
</dbReference>
<dbReference type="PANTHER" id="PTHR10730">
    <property type="entry name" value="PROCOLLAGEN-LYSINE,2-OXOGLUTARATE 5-DIOXYGENASE/GLYCOSYLTRANSFERASE 25 FAMILY MEMBER"/>
    <property type="match status" value="1"/>
</dbReference>
<dbReference type="Pfam" id="PF03171">
    <property type="entry name" value="2OG-FeII_Oxy"/>
    <property type="match status" value="1"/>
</dbReference>
<dbReference type="Pfam" id="PF25342">
    <property type="entry name" value="GT_PLOD"/>
    <property type="match status" value="1"/>
</dbReference>
<dbReference type="SMART" id="SM00702">
    <property type="entry name" value="P4Hc"/>
    <property type="match status" value="1"/>
</dbReference>
<dbReference type="SUPFAM" id="SSF53448">
    <property type="entry name" value="Nucleotide-diphospho-sugar transferases"/>
    <property type="match status" value="1"/>
</dbReference>
<dbReference type="PROSITE" id="PS51471">
    <property type="entry name" value="FE2OG_OXY"/>
    <property type="match status" value="1"/>
</dbReference>
<dbReference type="PROSITE" id="PS01325">
    <property type="entry name" value="LYS_HYDROXYLASE"/>
    <property type="match status" value="1"/>
</dbReference>
<proteinExistence type="evidence at protein level"/>
<organism>
    <name type="scientific">Homo sapiens</name>
    <name type="common">Human</name>
    <dbReference type="NCBI Taxonomy" id="9606"/>
    <lineage>
        <taxon>Eukaryota</taxon>
        <taxon>Metazoa</taxon>
        <taxon>Chordata</taxon>
        <taxon>Craniata</taxon>
        <taxon>Vertebrata</taxon>
        <taxon>Euteleostomi</taxon>
        <taxon>Mammalia</taxon>
        <taxon>Eutheria</taxon>
        <taxon>Euarchontoglires</taxon>
        <taxon>Primates</taxon>
        <taxon>Haplorrhini</taxon>
        <taxon>Catarrhini</taxon>
        <taxon>Hominidae</taxon>
        <taxon>Homo</taxon>
    </lineage>
</organism>
<protein>
    <recommendedName>
        <fullName evidence="14">Procollagen-lysine,2-oxoglutarate 5-dioxygenase 2</fullName>
        <ecNumber evidence="1">1.14.11.4</ecNumber>
    </recommendedName>
    <alternativeName>
        <fullName>Lysyl hydroxylase 2</fullName>
        <shortName>LH2</shortName>
    </alternativeName>
</protein>
<name>PLOD2_HUMAN</name>
<accession>O00469</accession>
<accession>B3KWS3</accession>
<accession>Q59ED2</accession>
<accession>Q8N170</accession>
<reference key="1">
    <citation type="journal article" date="1997" name="J. Biol. Chem.">
        <title>Cloning and characterization of a novel human lysyl hydroxylase isoform highly expressed in pancreas and muscle.</title>
        <authorList>
            <person name="Valtavaara M."/>
            <person name="Papponen H."/>
            <person name="Pirttila A.M."/>
            <person name="Hiltunen K."/>
            <person name="Helander H."/>
            <person name="Myllylae R."/>
        </authorList>
    </citation>
    <scope>NUCLEOTIDE SEQUENCE [MRNA] (ISOFORM 1)</scope>
    <source>
        <tissue>Kidney</tissue>
    </source>
</reference>
<reference key="2">
    <citation type="journal article" date="2004" name="Nat. Genet.">
        <title>Complete sequencing and characterization of 21,243 full-length human cDNAs.</title>
        <authorList>
            <person name="Ota T."/>
            <person name="Suzuki Y."/>
            <person name="Nishikawa T."/>
            <person name="Otsuki T."/>
            <person name="Sugiyama T."/>
            <person name="Irie R."/>
            <person name="Wakamatsu A."/>
            <person name="Hayashi K."/>
            <person name="Sato H."/>
            <person name="Nagai K."/>
            <person name="Kimura K."/>
            <person name="Makita H."/>
            <person name="Sekine M."/>
            <person name="Obayashi M."/>
            <person name="Nishi T."/>
            <person name="Shibahara T."/>
            <person name="Tanaka T."/>
            <person name="Ishii S."/>
            <person name="Yamamoto J."/>
            <person name="Saito K."/>
            <person name="Kawai Y."/>
            <person name="Isono Y."/>
            <person name="Nakamura Y."/>
            <person name="Nagahari K."/>
            <person name="Murakami K."/>
            <person name="Yasuda T."/>
            <person name="Iwayanagi T."/>
            <person name="Wagatsuma M."/>
            <person name="Shiratori A."/>
            <person name="Sudo H."/>
            <person name="Hosoiri T."/>
            <person name="Kaku Y."/>
            <person name="Kodaira H."/>
            <person name="Kondo H."/>
            <person name="Sugawara M."/>
            <person name="Takahashi M."/>
            <person name="Kanda K."/>
            <person name="Yokoi T."/>
            <person name="Furuya T."/>
            <person name="Kikkawa E."/>
            <person name="Omura Y."/>
            <person name="Abe K."/>
            <person name="Kamihara K."/>
            <person name="Katsuta N."/>
            <person name="Sato K."/>
            <person name="Tanikawa M."/>
            <person name="Yamazaki M."/>
            <person name="Ninomiya K."/>
            <person name="Ishibashi T."/>
            <person name="Yamashita H."/>
            <person name="Murakawa K."/>
            <person name="Fujimori K."/>
            <person name="Tanai H."/>
            <person name="Kimata M."/>
            <person name="Watanabe M."/>
            <person name="Hiraoka S."/>
            <person name="Chiba Y."/>
            <person name="Ishida S."/>
            <person name="Ono Y."/>
            <person name="Takiguchi S."/>
            <person name="Watanabe S."/>
            <person name="Yosida M."/>
            <person name="Hotuta T."/>
            <person name="Kusano J."/>
            <person name="Kanehori K."/>
            <person name="Takahashi-Fujii A."/>
            <person name="Hara H."/>
            <person name="Tanase T.-O."/>
            <person name="Nomura Y."/>
            <person name="Togiya S."/>
            <person name="Komai F."/>
            <person name="Hara R."/>
            <person name="Takeuchi K."/>
            <person name="Arita M."/>
            <person name="Imose N."/>
            <person name="Musashino K."/>
            <person name="Yuuki H."/>
            <person name="Oshima A."/>
            <person name="Sasaki N."/>
            <person name="Aotsuka S."/>
            <person name="Yoshikawa Y."/>
            <person name="Matsunawa H."/>
            <person name="Ichihara T."/>
            <person name="Shiohata N."/>
            <person name="Sano S."/>
            <person name="Moriya S."/>
            <person name="Momiyama H."/>
            <person name="Satoh N."/>
            <person name="Takami S."/>
            <person name="Terashima Y."/>
            <person name="Suzuki O."/>
            <person name="Nakagawa S."/>
            <person name="Senoh A."/>
            <person name="Mizoguchi H."/>
            <person name="Goto Y."/>
            <person name="Shimizu F."/>
            <person name="Wakebe H."/>
            <person name="Hishigaki H."/>
            <person name="Watanabe T."/>
            <person name="Sugiyama A."/>
            <person name="Takemoto M."/>
            <person name="Kawakami B."/>
            <person name="Yamazaki M."/>
            <person name="Watanabe K."/>
            <person name="Kumagai A."/>
            <person name="Itakura S."/>
            <person name="Fukuzumi Y."/>
            <person name="Fujimori Y."/>
            <person name="Komiyama M."/>
            <person name="Tashiro H."/>
            <person name="Tanigami A."/>
            <person name="Fujiwara T."/>
            <person name="Ono T."/>
            <person name="Yamada K."/>
            <person name="Fujii Y."/>
            <person name="Ozaki K."/>
            <person name="Hirao M."/>
            <person name="Ohmori Y."/>
            <person name="Kawabata A."/>
            <person name="Hikiji T."/>
            <person name="Kobatake N."/>
            <person name="Inagaki H."/>
            <person name="Ikema Y."/>
            <person name="Okamoto S."/>
            <person name="Okitani R."/>
            <person name="Kawakami T."/>
            <person name="Noguchi S."/>
            <person name="Itoh T."/>
            <person name="Shigeta K."/>
            <person name="Senba T."/>
            <person name="Matsumura K."/>
            <person name="Nakajima Y."/>
            <person name="Mizuno T."/>
            <person name="Morinaga M."/>
            <person name="Sasaki M."/>
            <person name="Togashi T."/>
            <person name="Oyama M."/>
            <person name="Hata H."/>
            <person name="Watanabe M."/>
            <person name="Komatsu T."/>
            <person name="Mizushima-Sugano J."/>
            <person name="Satoh T."/>
            <person name="Shirai Y."/>
            <person name="Takahashi Y."/>
            <person name="Nakagawa K."/>
            <person name="Okumura K."/>
            <person name="Nagase T."/>
            <person name="Nomura N."/>
            <person name="Kikuchi H."/>
            <person name="Masuho Y."/>
            <person name="Yamashita R."/>
            <person name="Nakai K."/>
            <person name="Yada T."/>
            <person name="Nakamura Y."/>
            <person name="Ohara O."/>
            <person name="Isogai T."/>
            <person name="Sugano S."/>
        </authorList>
    </citation>
    <scope>NUCLEOTIDE SEQUENCE [LARGE SCALE MRNA] (ISOFORM 3)</scope>
    <source>
        <tissue>Esophagus</tissue>
    </source>
</reference>
<reference key="3">
    <citation type="submission" date="2005-03" db="EMBL/GenBank/DDBJ databases">
        <title>Homo sapiens protein coding cDNA.</title>
        <authorList>
            <person name="Totoki Y."/>
            <person name="Toyoda A."/>
            <person name="Takeda T."/>
            <person name="Sakaki Y."/>
            <person name="Tanaka A."/>
            <person name="Yokoyama S."/>
            <person name="Ohara O."/>
            <person name="Nagase T."/>
            <person name="Kikuno R.F."/>
        </authorList>
    </citation>
    <scope>NUCLEOTIDE SEQUENCE [LARGE SCALE MRNA] (ISOFORM 1)</scope>
    <source>
        <tissue>Aortic endothelium</tissue>
    </source>
</reference>
<reference key="4">
    <citation type="journal article" date="2006" name="Nature">
        <title>The DNA sequence, annotation and analysis of human chromosome 3.</title>
        <authorList>
            <person name="Muzny D.M."/>
            <person name="Scherer S.E."/>
            <person name="Kaul R."/>
            <person name="Wang J."/>
            <person name="Yu J."/>
            <person name="Sudbrak R."/>
            <person name="Buhay C.J."/>
            <person name="Chen R."/>
            <person name="Cree A."/>
            <person name="Ding Y."/>
            <person name="Dugan-Rocha S."/>
            <person name="Gill R."/>
            <person name="Gunaratne P."/>
            <person name="Harris R.A."/>
            <person name="Hawes A.C."/>
            <person name="Hernandez J."/>
            <person name="Hodgson A.V."/>
            <person name="Hume J."/>
            <person name="Jackson A."/>
            <person name="Khan Z.M."/>
            <person name="Kovar-Smith C."/>
            <person name="Lewis L.R."/>
            <person name="Lozado R.J."/>
            <person name="Metzker M.L."/>
            <person name="Milosavljevic A."/>
            <person name="Miner G.R."/>
            <person name="Morgan M.B."/>
            <person name="Nazareth L.V."/>
            <person name="Scott G."/>
            <person name="Sodergren E."/>
            <person name="Song X.-Z."/>
            <person name="Steffen D."/>
            <person name="Wei S."/>
            <person name="Wheeler D.A."/>
            <person name="Wright M.W."/>
            <person name="Worley K.C."/>
            <person name="Yuan Y."/>
            <person name="Zhang Z."/>
            <person name="Adams C.Q."/>
            <person name="Ansari-Lari M.A."/>
            <person name="Ayele M."/>
            <person name="Brown M.J."/>
            <person name="Chen G."/>
            <person name="Chen Z."/>
            <person name="Clendenning J."/>
            <person name="Clerc-Blankenburg K.P."/>
            <person name="Chen R."/>
            <person name="Chen Z."/>
            <person name="Davis C."/>
            <person name="Delgado O."/>
            <person name="Dinh H.H."/>
            <person name="Dong W."/>
            <person name="Draper H."/>
            <person name="Ernst S."/>
            <person name="Fu G."/>
            <person name="Gonzalez-Garay M.L."/>
            <person name="Garcia D.K."/>
            <person name="Gillett W."/>
            <person name="Gu J."/>
            <person name="Hao B."/>
            <person name="Haugen E."/>
            <person name="Havlak P."/>
            <person name="He X."/>
            <person name="Hennig S."/>
            <person name="Hu S."/>
            <person name="Huang W."/>
            <person name="Jackson L.R."/>
            <person name="Jacob L.S."/>
            <person name="Kelly S.H."/>
            <person name="Kube M."/>
            <person name="Levy R."/>
            <person name="Li Z."/>
            <person name="Liu B."/>
            <person name="Liu J."/>
            <person name="Liu W."/>
            <person name="Lu J."/>
            <person name="Maheshwari M."/>
            <person name="Nguyen B.-V."/>
            <person name="Okwuonu G.O."/>
            <person name="Palmeiri A."/>
            <person name="Pasternak S."/>
            <person name="Perez L.M."/>
            <person name="Phelps K.A."/>
            <person name="Plopper F.J."/>
            <person name="Qiang B."/>
            <person name="Raymond C."/>
            <person name="Rodriguez R."/>
            <person name="Saenphimmachak C."/>
            <person name="Santibanez J."/>
            <person name="Shen H."/>
            <person name="Shen Y."/>
            <person name="Subramanian S."/>
            <person name="Tabor P.E."/>
            <person name="Verduzco D."/>
            <person name="Waldron L."/>
            <person name="Wang J."/>
            <person name="Wang J."/>
            <person name="Wang Q."/>
            <person name="Williams G.A."/>
            <person name="Wong G.K.-S."/>
            <person name="Yao Z."/>
            <person name="Zhang J."/>
            <person name="Zhang X."/>
            <person name="Zhao G."/>
            <person name="Zhou J."/>
            <person name="Zhou Y."/>
            <person name="Nelson D."/>
            <person name="Lehrach H."/>
            <person name="Reinhardt R."/>
            <person name="Naylor S.L."/>
            <person name="Yang H."/>
            <person name="Olson M."/>
            <person name="Weinstock G."/>
            <person name="Gibbs R.A."/>
        </authorList>
    </citation>
    <scope>NUCLEOTIDE SEQUENCE [LARGE SCALE GENOMIC DNA]</scope>
</reference>
<reference key="5">
    <citation type="journal article" date="1999" name="Matrix Biol.">
        <title>Tissue specificity of a new splice form of the human lysyl hydroxylase 2 gene.</title>
        <authorList>
            <person name="Yeowell H.N."/>
            <person name="Walker L.C."/>
        </authorList>
    </citation>
    <scope>NUCLEOTIDE SEQUENCE [MRNA] (ISOFORM 2)</scope>
    <scope>TISSUE SPECIFICITY</scope>
    <source>
        <tissue>Skin fibroblast</tissue>
    </source>
</reference>
<reference key="6">
    <citation type="journal article" date="2004" name="Genome Res.">
        <title>The status, quality, and expansion of the NIH full-length cDNA project: the Mammalian Gene Collection (MGC).</title>
        <authorList>
            <consortium name="The MGC Project Team"/>
        </authorList>
    </citation>
    <scope>NUCLEOTIDE SEQUENCE [LARGE SCALE MRNA] (ISOFORM 2)</scope>
    <source>
        <tissue>Placenta</tissue>
    </source>
</reference>
<reference key="7">
    <citation type="journal article" date="2008" name="J. Proteome Res.">
        <title>Phosphoproteome of resting human platelets.</title>
        <authorList>
            <person name="Zahedi R.P."/>
            <person name="Lewandrowski U."/>
            <person name="Wiesner J."/>
            <person name="Wortelkamp S."/>
            <person name="Moebius J."/>
            <person name="Schuetz C."/>
            <person name="Walter U."/>
            <person name="Gambaryan S."/>
            <person name="Sickmann A."/>
        </authorList>
    </citation>
    <scope>PHOSPHORYLATION [LARGE SCALE ANALYSIS] AT THR-320 AND TYR-323</scope>
    <scope>IDENTIFICATION BY MASS SPECTROMETRY [LARGE SCALE ANALYSIS]</scope>
    <source>
        <tissue>Platelet</tissue>
    </source>
</reference>
<reference key="8">
    <citation type="journal article" date="2009" name="J. Proteome Res.">
        <title>Glycoproteomics analysis of human liver tissue by combination of multiple enzyme digestion and hydrazide chemistry.</title>
        <authorList>
            <person name="Chen R."/>
            <person name="Jiang X."/>
            <person name="Sun D."/>
            <person name="Han G."/>
            <person name="Wang F."/>
            <person name="Ye M."/>
            <person name="Wang L."/>
            <person name="Zou H."/>
        </authorList>
    </citation>
    <scope>GLYCOSYLATION [LARGE SCALE ANALYSIS] AT ASN-209 AND ASN-522</scope>
    <source>
        <tissue>Liver</tissue>
    </source>
</reference>
<reference key="9">
    <citation type="journal article" date="2011" name="BMC Syst. Biol.">
        <title>Initial characterization of the human central proteome.</title>
        <authorList>
            <person name="Burkard T.R."/>
            <person name="Planyavsky M."/>
            <person name="Kaupe I."/>
            <person name="Breitwieser F.P."/>
            <person name="Buerckstuemmer T."/>
            <person name="Bennett K.L."/>
            <person name="Superti-Furga G."/>
            <person name="Colinge J."/>
        </authorList>
    </citation>
    <scope>IDENTIFICATION BY MASS SPECTROMETRY [LARGE SCALE ANALYSIS]</scope>
</reference>
<reference key="10">
    <citation type="journal article" date="2003" name="J. Biol. Chem.">
        <title>Identification of PLOD2 as telopeptide lysyl hydroxylase, an important enzyme in fibrosis.</title>
        <authorList>
            <person name="van der Slot A.J."/>
            <person name="Zuurmond A.-M."/>
            <person name="Bardoel A.F.J."/>
            <person name="Wijmenga C."/>
            <person name="Pruijs H.E.H."/>
            <person name="Sillence D.O."/>
            <person name="Brinckmann J."/>
            <person name="Abraham D.J."/>
            <person name="Black C.M."/>
            <person name="Verzijl N."/>
            <person name="DeGroot J."/>
            <person name="Hanemaaijer R."/>
            <person name="TeKoppele J.M."/>
            <person name="Huizinga T.W.J."/>
            <person name="Bank R.A."/>
        </authorList>
    </citation>
    <scope>VARIANTS BRKS2 VAL-601 AND ILE-608</scope>
</reference>
<reference key="11">
    <citation type="journal article" date="2004" name="Am. J. Med. Genet. A">
        <title>Phenotypic and molecular characterization of Bruck syndrome (osteogenesis imperfecta with contractures of the large joints) caused by a recessive mutation in PLOD2.</title>
        <authorList>
            <person name="Ha-Vinh R."/>
            <person name="Alanay Y."/>
            <person name="Bank R.A."/>
            <person name="Campos-Xavier A.B."/>
            <person name="Zankl A."/>
            <person name="Superti-Furga A."/>
            <person name="Bonafe L."/>
        </authorList>
    </citation>
    <scope>VARIANT BRKS2 HIS-598</scope>
</reference>
<reference key="12">
    <citation type="journal article" date="2012" name="Hum. Mutat.">
        <title>Mutations in PLOD2 cause autosomal-recessive connective tissue disorders within the Bruck syndrome--osteogenesis imperfecta phenotypic spectrum.</title>
        <authorList>
            <person name="Puig-Hervas M.T."/>
            <person name="Temtamy S."/>
            <person name="Aglan M."/>
            <person name="Valencia M."/>
            <person name="Martinez-Glez V."/>
            <person name="Ballesta-Martinez M.J."/>
            <person name="Lopez-Gonzalez V."/>
            <person name="Ashour A.M."/>
            <person name="Amr K."/>
            <person name="Pulido V."/>
            <person name="Guillen-Navarro E."/>
            <person name="Lapunzina P."/>
            <person name="Caparros-Martin J.A."/>
            <person name="Ruiz-Perez V.L."/>
        </authorList>
    </citation>
    <scope>VARIANT BRKS2 CYS-601</scope>
</reference>
<reference key="13">
    <citation type="journal article" date="2018" name="Neuron">
        <title>De Novo Mutation in Genes Regulating Neural Stem Cell Fate in Human Congenital Hydrocephalus.</title>
        <authorList>
            <person name="Furey C.G."/>
            <person name="Choi J."/>
            <person name="Jin S.C."/>
            <person name="Zeng X."/>
            <person name="Timberlake A.T."/>
            <person name="Nelson-Williams C."/>
            <person name="Mansuri M.S."/>
            <person name="Lu Q."/>
            <person name="Duran D."/>
            <person name="Panchagnula S."/>
            <person name="Allocco A."/>
            <person name="Karimy J.K."/>
            <person name="Khanna A."/>
            <person name="Gaillard J.R."/>
            <person name="DeSpenza T."/>
            <person name="Antwi P."/>
            <person name="Loring E."/>
            <person name="Butler W.E."/>
            <person name="Smith E.R."/>
            <person name="Warf B.C."/>
            <person name="Strahle J.M."/>
            <person name="Limbrick D.D."/>
            <person name="Storm P.B."/>
            <person name="Heuer G."/>
            <person name="Jackson E.M."/>
            <person name="Iskandar B.J."/>
            <person name="Johnston J.M."/>
            <person name="Tikhonova I."/>
            <person name="Castaldi C."/>
            <person name="Lopez-Giraldez F."/>
            <person name="Bjornson R.D."/>
            <person name="Knight J.R."/>
            <person name="Bilguvar K."/>
            <person name="Mane S."/>
            <person name="Alper S.L."/>
            <person name="Haider S."/>
            <person name="Guclu B."/>
            <person name="Bayri Y."/>
            <person name="Sahin Y."/>
            <person name="Apuzzo M.L.J."/>
            <person name="Duncan C.C."/>
            <person name="DiLuna M.L."/>
            <person name="Guenel M."/>
            <person name="Lifton R.P."/>
            <person name="Kahle K.T."/>
        </authorList>
    </citation>
    <scope>VARIANTS GLN-473 AND MET-643</scope>
</reference>
<comment type="function">
    <text evidence="1">Forms hydroxylysine residues in -Xaa-Lys-Gly- sequences in collagens. These hydroxylysines serve as sites of attachment for carbohydrate units and are essential for the stability of the intermolecular collagen cross-links.</text>
</comment>
<comment type="catalytic activity">
    <reaction evidence="1">
        <text>L-lysyl-[collagen] + 2-oxoglutarate + O2 = (5R)-5-hydroxy-L-lysyl-[collagen] + succinate + CO2</text>
        <dbReference type="Rhea" id="RHEA:16569"/>
        <dbReference type="Rhea" id="RHEA-COMP:12751"/>
        <dbReference type="Rhea" id="RHEA-COMP:12752"/>
        <dbReference type="ChEBI" id="CHEBI:15379"/>
        <dbReference type="ChEBI" id="CHEBI:16526"/>
        <dbReference type="ChEBI" id="CHEBI:16810"/>
        <dbReference type="ChEBI" id="CHEBI:29969"/>
        <dbReference type="ChEBI" id="CHEBI:30031"/>
        <dbReference type="ChEBI" id="CHEBI:133442"/>
        <dbReference type="EC" id="1.14.11.4"/>
    </reaction>
</comment>
<comment type="cofactor">
    <cofactor evidence="1">
        <name>Fe(2+)</name>
        <dbReference type="ChEBI" id="CHEBI:29033"/>
    </cofactor>
</comment>
<comment type="cofactor">
    <cofactor evidence="1">
        <name>L-ascorbate</name>
        <dbReference type="ChEBI" id="CHEBI:38290"/>
    </cofactor>
</comment>
<comment type="subunit">
    <text evidence="1">Homodimer.</text>
</comment>
<comment type="subcellular location">
    <subcellularLocation>
        <location>Rough endoplasmic reticulum membrane</location>
        <topology>Peripheral membrane protein</topology>
        <orientation>Lumenal side</orientation>
    </subcellularLocation>
</comment>
<comment type="alternative products">
    <event type="alternative splicing"/>
    <isoform>
        <id>O00469-1</id>
        <name>1</name>
        <name>A</name>
        <sequence type="displayed"/>
    </isoform>
    <isoform>
        <id>O00469-2</id>
        <name>2</name>
        <name>B</name>
        <sequence type="described" ref="VSP_013467"/>
    </isoform>
    <isoform>
        <id>O00469-3</id>
        <name>3</name>
        <sequence type="described" ref="VSP_057221 VSP_057222 VSP_013467"/>
    </isoform>
</comment>
<comment type="tissue specificity">
    <text evidence="5">Highly expressed in pancreas and muscle. Isoform 1 and isoform 2 are expressed in the majority of the examined cell types. Isoform 2 is specifically expressed in skin, lung, dura and aorta.</text>
</comment>
<comment type="disease" evidence="6 7 9">
    <disease id="DI-01299">
        <name>Bruck syndrome 2</name>
        <acronym>BRKS2</acronym>
        <description>An autosomal recessive disease characterized by generalized osteopenia, congenital joint contractures, fragile bones with onset of fractures in infancy or early childhood, short stature, severe limb deformity, progressive scoliosis, and pterygia. It is distinguished from osteogenesis imperfecta by the absence of hearing loss and dentinogenesis imperfecta, and by the presence of clubfoot and congenital joint limitations.</description>
        <dbReference type="MIM" id="609220"/>
    </disease>
    <text>The disease is caused by variants affecting the gene represented in this entry. The molecular defect leading to Bruck syndrome is an aberrant cross-linking of bone collagen, due to underhydroxylation of lysine residues within the telopeptides of type I collagen, whereas the lysine residues in the triple helix are normal.</text>
</comment>
<comment type="sequence caution" evidence="14">
    <conflict type="erroneous initiation">
        <sequence resource="EMBL-CDS" id="BAD93116"/>
    </conflict>
    <text>Extended N-terminus.</text>
</comment>
<comment type="online information" name="Osteogenesis imperfecta variant database">
    <link uri="https://www.LOVD.nl/PLOD2"/>
    <text>The PLOD2 gene homepage</text>
</comment>
<keyword id="KW-0025">Alternative splicing</keyword>
<keyword id="KW-0223">Dioxygenase</keyword>
<keyword id="KW-0225">Disease variant</keyword>
<keyword id="KW-0256">Endoplasmic reticulum</keyword>
<keyword id="KW-0325">Glycoprotein</keyword>
<keyword id="KW-0408">Iron</keyword>
<keyword id="KW-0472">Membrane</keyword>
<keyword id="KW-0479">Metal-binding</keyword>
<keyword id="KW-1065">Osteogenesis imperfecta</keyword>
<keyword id="KW-0560">Oxidoreductase</keyword>
<keyword id="KW-0597">Phosphoprotein</keyword>
<keyword id="KW-1267">Proteomics identification</keyword>
<keyword id="KW-1185">Reference proteome</keyword>
<keyword id="KW-0732">Signal</keyword>
<keyword id="KW-0847">Vitamin C</keyword>
<feature type="signal peptide" evidence="3">
    <location>
        <begin position="1"/>
        <end position="25"/>
    </location>
</feature>
<feature type="chain" id="PRO_0000024683" description="Procollagen-lysine,2-oxoglutarate 5-dioxygenase 2">
    <location>
        <begin position="26"/>
        <end position="737"/>
    </location>
</feature>
<feature type="domain" description="Fe2OG dioxygenase" evidence="4">
    <location>
        <begin position="644"/>
        <end position="737"/>
    </location>
</feature>
<feature type="active site" evidence="3">
    <location>
        <position position="728"/>
    </location>
</feature>
<feature type="binding site" evidence="4">
    <location>
        <position position="666"/>
    </location>
    <ligand>
        <name>Fe cation</name>
        <dbReference type="ChEBI" id="CHEBI:24875"/>
    </ligand>
</feature>
<feature type="binding site" evidence="4">
    <location>
        <position position="668"/>
    </location>
    <ligand>
        <name>Fe cation</name>
        <dbReference type="ChEBI" id="CHEBI:24875"/>
    </ligand>
</feature>
<feature type="binding site" evidence="4">
    <location>
        <position position="718"/>
    </location>
    <ligand>
        <name>Fe cation</name>
        <dbReference type="ChEBI" id="CHEBI:24875"/>
    </ligand>
</feature>
<feature type="modified residue" description="Phosphothreonine" evidence="16">
    <location>
        <position position="320"/>
    </location>
</feature>
<feature type="modified residue" description="Phosphotyrosine" evidence="16">
    <location>
        <position position="323"/>
    </location>
</feature>
<feature type="modified residue" description="N6-succinyllysine" evidence="2">
    <location>
        <position position="704"/>
    </location>
</feature>
<feature type="glycosylation site" description="N-linked (GlcNAc...) asparagine" evidence="3">
    <location>
        <position position="63"/>
    </location>
</feature>
<feature type="glycosylation site" description="N-linked (GlcNAc...) asparagine" evidence="8">
    <location>
        <position position="209"/>
    </location>
</feature>
<feature type="glycosylation site" description="N-linked (GlcNAc...) asparagine" evidence="3">
    <location>
        <position position="297"/>
    </location>
</feature>
<feature type="glycosylation site" description="N-linked (GlcNAc...) asparagine" evidence="3">
    <location>
        <position position="365"/>
    </location>
</feature>
<feature type="glycosylation site" description="N-linked (GlcNAc...) asparagine" evidence="8">
    <location>
        <position position="522"/>
    </location>
</feature>
<feature type="glycosylation site" description="N-linked (GlcNAc...) asparagine" evidence="3">
    <location>
        <position position="696"/>
    </location>
</feature>
<feature type="glycosylation site" description="N-linked (GlcNAc...) asparagine" evidence="3">
    <location>
        <position position="725"/>
    </location>
</feature>
<feature type="splice variant" id="VSP_057221" description="In isoform 3." evidence="12">
    <original>MGGCTVKPQLLLLALVLHPWNPCLGADSEKPSSIPT</original>
    <variation>MLENHILHKRIYILTFFSQQIFILCHAHFIFFFTVR</variation>
    <location>
        <begin position="1"/>
        <end position="36"/>
    </location>
</feature>
<feature type="splice variant" id="VSP_057222" description="In isoform 3." evidence="12">
    <location>
        <begin position="37"/>
        <end position="376"/>
    </location>
</feature>
<feature type="splice variant" id="VSP_013467" description="In isoform 2 and isoform 3." evidence="11 12 13">
    <original>M</original>
    <variation>MTLQREKDSPTPETFQMLSPPK</variation>
    <location>
        <position position="500"/>
    </location>
</feature>
<feature type="sequence variant" id="VAR_083432" description="Found in a patient with congenital hydrocephalus; uncertain significance; dbSNP:rs533478450." evidence="10">
    <original>R</original>
    <variation>Q</variation>
    <location>
        <position position="473"/>
    </location>
</feature>
<feature type="sequence variant" id="VAR_022164" description="In BRKS2; dbSNP:rs121434461." evidence="7">
    <original>R</original>
    <variation>H</variation>
    <location>
        <position position="598"/>
    </location>
</feature>
<feature type="sequence variant" id="VAR_069531" description="In BRKS2; phenotype characterized by mild to severe osteogenesis imperfecta with or without postnatal contractures; dbSNP:rs762788421." evidence="9">
    <original>G</original>
    <variation>C</variation>
    <location>
        <position position="601"/>
    </location>
</feature>
<feature type="sequence variant" id="VAR_022165" description="In BRKS2; dbSNP:rs121434460." evidence="6">
    <original>G</original>
    <variation>V</variation>
    <location>
        <position position="601"/>
    </location>
</feature>
<feature type="sequence variant" id="VAR_022166" description="In BRKS2; dbSNP:rs121434459." evidence="6">
    <original>T</original>
    <variation>I</variation>
    <location>
        <position position="608"/>
    </location>
</feature>
<feature type="sequence variant" id="VAR_083433" description="Found in a patient with congenital hydrocephalus; uncertain significance; dbSNP:rs763670371." evidence="10">
    <original>T</original>
    <variation>M</variation>
    <location>
        <position position="643"/>
    </location>
</feature>
<feature type="sequence conflict" description="In Ref. 1; AAB58363." evidence="14" ref="1">
    <original>H</original>
    <variation>D</variation>
    <location>
        <position position="624"/>
    </location>
</feature>
<evidence type="ECO:0000250" key="1">
    <source>
        <dbReference type="UniProtKB" id="P24802"/>
    </source>
</evidence>
<evidence type="ECO:0000250" key="2">
    <source>
        <dbReference type="UniProtKB" id="Q9R0B9"/>
    </source>
</evidence>
<evidence type="ECO:0000255" key="3"/>
<evidence type="ECO:0000255" key="4">
    <source>
        <dbReference type="PROSITE-ProRule" id="PRU00805"/>
    </source>
</evidence>
<evidence type="ECO:0000269" key="5">
    <source>
    </source>
</evidence>
<evidence type="ECO:0000269" key="6">
    <source>
    </source>
</evidence>
<evidence type="ECO:0000269" key="7">
    <source>
    </source>
</evidence>
<evidence type="ECO:0000269" key="8">
    <source>
    </source>
</evidence>
<evidence type="ECO:0000269" key="9">
    <source>
    </source>
</evidence>
<evidence type="ECO:0000269" key="10">
    <source>
    </source>
</evidence>
<evidence type="ECO:0000303" key="11">
    <source>
    </source>
</evidence>
<evidence type="ECO:0000303" key="12">
    <source>
    </source>
</evidence>
<evidence type="ECO:0000303" key="13">
    <source>
    </source>
</evidence>
<evidence type="ECO:0000305" key="14"/>
<evidence type="ECO:0000312" key="15">
    <source>
        <dbReference type="HGNC" id="HGNC:9082"/>
    </source>
</evidence>
<evidence type="ECO:0007744" key="16">
    <source>
    </source>
</evidence>
<gene>
    <name evidence="15" type="primary">PLOD2</name>
</gene>